<gene>
    <name evidence="1" type="primary">gatB</name>
    <name type="ordered locus">Achl_1351</name>
</gene>
<keyword id="KW-0067">ATP-binding</keyword>
<keyword id="KW-0436">Ligase</keyword>
<keyword id="KW-0547">Nucleotide-binding</keyword>
<keyword id="KW-0648">Protein biosynthesis</keyword>
<sequence>MSTDTILSFEEAMEKYDPVLGFEVHVELNTKTKMFSSAPNVFGDEPNTNVNEVDLGMPGVLPVVNKTAIESSIKIGLALNCKIAETCRFARKQYFYPDTPKNFQTSQYDEPIAYDGYLDIELEDGTVFRVEIERAHMEEDAGKLTHMGGATGRIQGADFSLVDYNRAGVPLVEIVTKPIEGAGSRAPELAKAYVAAVREIVKNLGVSDARMERGNVRCDANVSLRPHGRERFGIRSETKNVNSLRAVEHAVRYEIQRHAAVLDAGEPVIQETRHWHEDTRTTTSGRAKSDADDYRYFPEPDLVPMVASREWVEELRATLPEPPAERRKRLKADWGYSDLEFRDVVNAGVLDEIEETISAGASASVARKWWMGEIVGRAKAADVDPGHLGVQPATIVELAKMVEDGKINNKMASQVLDGVLAGEGTPEEIVEKRGLAVVSDDGPLLEAIDAALAAQPDVADKIRGGKVQAIGAIVGGVMKATRGQADAGRVRELILEKLGVTA</sequence>
<proteinExistence type="inferred from homology"/>
<name>GATB_PSECP</name>
<dbReference type="EC" id="6.3.5.-" evidence="1"/>
<dbReference type="EMBL" id="CP001341">
    <property type="protein sequence ID" value="ACL39341.1"/>
    <property type="molecule type" value="Genomic_DNA"/>
</dbReference>
<dbReference type="RefSeq" id="WP_015936564.1">
    <property type="nucleotide sequence ID" value="NC_011886.1"/>
</dbReference>
<dbReference type="SMR" id="B8HFK2"/>
<dbReference type="STRING" id="452863.Achl_1351"/>
<dbReference type="KEGG" id="ach:Achl_1351"/>
<dbReference type="eggNOG" id="COG0064">
    <property type="taxonomic scope" value="Bacteria"/>
</dbReference>
<dbReference type="HOGENOM" id="CLU_019240_0_0_11"/>
<dbReference type="OrthoDB" id="9804078at2"/>
<dbReference type="Proteomes" id="UP000002505">
    <property type="component" value="Chromosome"/>
</dbReference>
<dbReference type="GO" id="GO:0050566">
    <property type="term" value="F:asparaginyl-tRNA synthase (glutamine-hydrolyzing) activity"/>
    <property type="evidence" value="ECO:0007669"/>
    <property type="project" value="RHEA"/>
</dbReference>
<dbReference type="GO" id="GO:0005524">
    <property type="term" value="F:ATP binding"/>
    <property type="evidence" value="ECO:0007669"/>
    <property type="project" value="UniProtKB-KW"/>
</dbReference>
<dbReference type="GO" id="GO:0050567">
    <property type="term" value="F:glutaminyl-tRNA synthase (glutamine-hydrolyzing) activity"/>
    <property type="evidence" value="ECO:0007669"/>
    <property type="project" value="UniProtKB-UniRule"/>
</dbReference>
<dbReference type="GO" id="GO:0070681">
    <property type="term" value="P:glutaminyl-tRNAGln biosynthesis via transamidation"/>
    <property type="evidence" value="ECO:0007669"/>
    <property type="project" value="TreeGrafter"/>
</dbReference>
<dbReference type="GO" id="GO:0006412">
    <property type="term" value="P:translation"/>
    <property type="evidence" value="ECO:0007669"/>
    <property type="project" value="UniProtKB-UniRule"/>
</dbReference>
<dbReference type="FunFam" id="1.10.10.410:FF:000002">
    <property type="entry name" value="Aspartyl/glutamyl-tRNA(Asn/Gln) amidotransferase subunit B"/>
    <property type="match status" value="1"/>
</dbReference>
<dbReference type="Gene3D" id="1.10.10.410">
    <property type="match status" value="1"/>
</dbReference>
<dbReference type="HAMAP" id="MF_00121">
    <property type="entry name" value="GatB"/>
    <property type="match status" value="1"/>
</dbReference>
<dbReference type="InterPro" id="IPR017959">
    <property type="entry name" value="Asn/Gln-tRNA_amidoTrfase_suB/E"/>
</dbReference>
<dbReference type="InterPro" id="IPR006075">
    <property type="entry name" value="Asn/Gln-tRNA_Trfase_suB/E_cat"/>
</dbReference>
<dbReference type="InterPro" id="IPR018027">
    <property type="entry name" value="Asn/Gln_amidotransferase"/>
</dbReference>
<dbReference type="InterPro" id="IPR003789">
    <property type="entry name" value="Asn/Gln_tRNA_amidoTrase-B-like"/>
</dbReference>
<dbReference type="InterPro" id="IPR004413">
    <property type="entry name" value="GatB"/>
</dbReference>
<dbReference type="InterPro" id="IPR023168">
    <property type="entry name" value="GatB_Yqey_C_2"/>
</dbReference>
<dbReference type="InterPro" id="IPR017958">
    <property type="entry name" value="Gln-tRNA_amidoTrfase_suB_CS"/>
</dbReference>
<dbReference type="InterPro" id="IPR014746">
    <property type="entry name" value="Gln_synth/guanido_kin_cat_dom"/>
</dbReference>
<dbReference type="NCBIfam" id="TIGR00133">
    <property type="entry name" value="gatB"/>
    <property type="match status" value="1"/>
</dbReference>
<dbReference type="NCBIfam" id="NF004012">
    <property type="entry name" value="PRK05477.1-2"/>
    <property type="match status" value="1"/>
</dbReference>
<dbReference type="NCBIfam" id="NF004013">
    <property type="entry name" value="PRK05477.1-3"/>
    <property type="match status" value="1"/>
</dbReference>
<dbReference type="NCBIfam" id="NF004014">
    <property type="entry name" value="PRK05477.1-4"/>
    <property type="match status" value="1"/>
</dbReference>
<dbReference type="PANTHER" id="PTHR11659">
    <property type="entry name" value="GLUTAMYL-TRNA GLN AMIDOTRANSFERASE SUBUNIT B MITOCHONDRIAL AND PROKARYOTIC PET112-RELATED"/>
    <property type="match status" value="1"/>
</dbReference>
<dbReference type="PANTHER" id="PTHR11659:SF0">
    <property type="entry name" value="GLUTAMYL-TRNA(GLN) AMIDOTRANSFERASE SUBUNIT B, MITOCHONDRIAL"/>
    <property type="match status" value="1"/>
</dbReference>
<dbReference type="Pfam" id="PF02934">
    <property type="entry name" value="GatB_N"/>
    <property type="match status" value="1"/>
</dbReference>
<dbReference type="Pfam" id="PF02637">
    <property type="entry name" value="GatB_Yqey"/>
    <property type="match status" value="1"/>
</dbReference>
<dbReference type="SMART" id="SM00845">
    <property type="entry name" value="GatB_Yqey"/>
    <property type="match status" value="1"/>
</dbReference>
<dbReference type="SUPFAM" id="SSF89095">
    <property type="entry name" value="GatB/YqeY motif"/>
    <property type="match status" value="1"/>
</dbReference>
<dbReference type="SUPFAM" id="SSF55931">
    <property type="entry name" value="Glutamine synthetase/guanido kinase"/>
    <property type="match status" value="1"/>
</dbReference>
<dbReference type="PROSITE" id="PS01234">
    <property type="entry name" value="GATB"/>
    <property type="match status" value="1"/>
</dbReference>
<organism>
    <name type="scientific">Pseudarthrobacter chlorophenolicus (strain ATCC 700700 / DSM 12829 / CIP 107037 / JCM 12360 / KCTC 9906 / NCIMB 13794 / A6)</name>
    <name type="common">Arthrobacter chlorophenolicus</name>
    <dbReference type="NCBI Taxonomy" id="452863"/>
    <lineage>
        <taxon>Bacteria</taxon>
        <taxon>Bacillati</taxon>
        <taxon>Actinomycetota</taxon>
        <taxon>Actinomycetes</taxon>
        <taxon>Micrococcales</taxon>
        <taxon>Micrococcaceae</taxon>
        <taxon>Pseudarthrobacter</taxon>
    </lineage>
</organism>
<accession>B8HFK2</accession>
<protein>
    <recommendedName>
        <fullName evidence="1">Aspartyl/glutamyl-tRNA(Asn/Gln) amidotransferase subunit B</fullName>
        <shortName evidence="1">Asp/Glu-ADT subunit B</shortName>
        <ecNumber evidence="1">6.3.5.-</ecNumber>
    </recommendedName>
</protein>
<reference key="1">
    <citation type="submission" date="2009-01" db="EMBL/GenBank/DDBJ databases">
        <title>Complete sequence of chromosome of Arthrobacter chlorophenolicus A6.</title>
        <authorList>
            <consortium name="US DOE Joint Genome Institute"/>
            <person name="Lucas S."/>
            <person name="Copeland A."/>
            <person name="Lapidus A."/>
            <person name="Glavina del Rio T."/>
            <person name="Tice H."/>
            <person name="Bruce D."/>
            <person name="Goodwin L."/>
            <person name="Pitluck S."/>
            <person name="Goltsman E."/>
            <person name="Clum A."/>
            <person name="Larimer F."/>
            <person name="Land M."/>
            <person name="Hauser L."/>
            <person name="Kyrpides N."/>
            <person name="Mikhailova N."/>
            <person name="Jansson J."/>
            <person name="Richardson P."/>
        </authorList>
    </citation>
    <scope>NUCLEOTIDE SEQUENCE [LARGE SCALE GENOMIC DNA]</scope>
    <source>
        <strain>ATCC 700700 / DSM 12829 / CIP 107037 / JCM 12360 / KCTC 9906 / NCIMB 13794 / A6</strain>
    </source>
</reference>
<feature type="chain" id="PRO_1000122504" description="Aspartyl/glutamyl-tRNA(Asn/Gln) amidotransferase subunit B">
    <location>
        <begin position="1"/>
        <end position="502"/>
    </location>
</feature>
<evidence type="ECO:0000255" key="1">
    <source>
        <dbReference type="HAMAP-Rule" id="MF_00121"/>
    </source>
</evidence>
<comment type="function">
    <text evidence="1">Allows the formation of correctly charged Asn-tRNA(Asn) or Gln-tRNA(Gln) through the transamidation of misacylated Asp-tRNA(Asn) or Glu-tRNA(Gln) in organisms which lack either or both of asparaginyl-tRNA or glutaminyl-tRNA synthetases. The reaction takes place in the presence of glutamine and ATP through an activated phospho-Asp-tRNA(Asn) or phospho-Glu-tRNA(Gln).</text>
</comment>
<comment type="catalytic activity">
    <reaction evidence="1">
        <text>L-glutamyl-tRNA(Gln) + L-glutamine + ATP + H2O = L-glutaminyl-tRNA(Gln) + L-glutamate + ADP + phosphate + H(+)</text>
        <dbReference type="Rhea" id="RHEA:17521"/>
        <dbReference type="Rhea" id="RHEA-COMP:9681"/>
        <dbReference type="Rhea" id="RHEA-COMP:9684"/>
        <dbReference type="ChEBI" id="CHEBI:15377"/>
        <dbReference type="ChEBI" id="CHEBI:15378"/>
        <dbReference type="ChEBI" id="CHEBI:29985"/>
        <dbReference type="ChEBI" id="CHEBI:30616"/>
        <dbReference type="ChEBI" id="CHEBI:43474"/>
        <dbReference type="ChEBI" id="CHEBI:58359"/>
        <dbReference type="ChEBI" id="CHEBI:78520"/>
        <dbReference type="ChEBI" id="CHEBI:78521"/>
        <dbReference type="ChEBI" id="CHEBI:456216"/>
    </reaction>
</comment>
<comment type="catalytic activity">
    <reaction evidence="1">
        <text>L-aspartyl-tRNA(Asn) + L-glutamine + ATP + H2O = L-asparaginyl-tRNA(Asn) + L-glutamate + ADP + phosphate + 2 H(+)</text>
        <dbReference type="Rhea" id="RHEA:14513"/>
        <dbReference type="Rhea" id="RHEA-COMP:9674"/>
        <dbReference type="Rhea" id="RHEA-COMP:9677"/>
        <dbReference type="ChEBI" id="CHEBI:15377"/>
        <dbReference type="ChEBI" id="CHEBI:15378"/>
        <dbReference type="ChEBI" id="CHEBI:29985"/>
        <dbReference type="ChEBI" id="CHEBI:30616"/>
        <dbReference type="ChEBI" id="CHEBI:43474"/>
        <dbReference type="ChEBI" id="CHEBI:58359"/>
        <dbReference type="ChEBI" id="CHEBI:78515"/>
        <dbReference type="ChEBI" id="CHEBI:78516"/>
        <dbReference type="ChEBI" id="CHEBI:456216"/>
    </reaction>
</comment>
<comment type="subunit">
    <text evidence="1">Heterotrimer of A, B and C subunits.</text>
</comment>
<comment type="similarity">
    <text evidence="1">Belongs to the GatB/GatE family. GatB subfamily.</text>
</comment>